<comment type="function">
    <text evidence="1">RNA chaperone with significant RNA binding, RNA strand exchange and RNA duplexing activities. May regulate ProP activity through an RNA-based, post-transcriptional mechanism.</text>
</comment>
<comment type="subcellular location">
    <subcellularLocation>
        <location evidence="1">Cytoplasm</location>
    </subcellularLocation>
</comment>
<comment type="similarity">
    <text evidence="1">Belongs to the ProQ family.</text>
</comment>
<evidence type="ECO:0000255" key="1">
    <source>
        <dbReference type="HAMAP-Rule" id="MF_00749"/>
    </source>
</evidence>
<evidence type="ECO:0000256" key="2">
    <source>
        <dbReference type="SAM" id="MobiDB-lite"/>
    </source>
</evidence>
<protein>
    <recommendedName>
        <fullName evidence="1">RNA chaperone ProQ</fullName>
    </recommendedName>
</protein>
<gene>
    <name evidence="1" type="primary">proQ</name>
    <name type="ordered locus">STY4489</name>
    <name type="ordered locus">t1032</name>
</gene>
<dbReference type="EMBL" id="AL513382">
    <property type="protein sequence ID" value="CAD05528.1"/>
    <property type="molecule type" value="Genomic_DNA"/>
</dbReference>
<dbReference type="EMBL" id="AE014613">
    <property type="protein sequence ID" value="AAO68699.1"/>
    <property type="molecule type" value="Genomic_DNA"/>
</dbReference>
<dbReference type="RefSeq" id="NP_456351.1">
    <property type="nucleotide sequence ID" value="NC_003198.1"/>
</dbReference>
<dbReference type="RefSeq" id="WP_000431401.1">
    <property type="nucleotide sequence ID" value="NZ_WSUR01000004.1"/>
</dbReference>
<dbReference type="SMR" id="P60318"/>
<dbReference type="STRING" id="220341.gene:17585893"/>
<dbReference type="KEGG" id="stt:t1032"/>
<dbReference type="KEGG" id="sty:STY1977"/>
<dbReference type="PATRIC" id="fig|220341.7.peg.1994"/>
<dbReference type="eggNOG" id="COG3109">
    <property type="taxonomic scope" value="Bacteria"/>
</dbReference>
<dbReference type="HOGENOM" id="CLU_113254_0_0_6"/>
<dbReference type="OMA" id="WRYLKGV"/>
<dbReference type="OrthoDB" id="8421419at2"/>
<dbReference type="Proteomes" id="UP000000541">
    <property type="component" value="Chromosome"/>
</dbReference>
<dbReference type="Proteomes" id="UP000002670">
    <property type="component" value="Chromosome"/>
</dbReference>
<dbReference type="GO" id="GO:0005829">
    <property type="term" value="C:cytosol"/>
    <property type="evidence" value="ECO:0007669"/>
    <property type="project" value="TreeGrafter"/>
</dbReference>
<dbReference type="GO" id="GO:0033592">
    <property type="term" value="F:RNA strand annealing activity"/>
    <property type="evidence" value="ECO:0007669"/>
    <property type="project" value="UniProtKB-UniRule"/>
</dbReference>
<dbReference type="GO" id="GO:0034057">
    <property type="term" value="F:RNA strand-exchange activity"/>
    <property type="evidence" value="ECO:0007669"/>
    <property type="project" value="UniProtKB-UniRule"/>
</dbReference>
<dbReference type="GO" id="GO:0010608">
    <property type="term" value="P:post-transcriptional regulation of gene expression"/>
    <property type="evidence" value="ECO:0007669"/>
    <property type="project" value="InterPro"/>
</dbReference>
<dbReference type="FunFam" id="1.10.1710.10:FF:000001">
    <property type="entry name" value="RNA chaperone ProQ"/>
    <property type="match status" value="1"/>
</dbReference>
<dbReference type="Gene3D" id="1.10.1710.10">
    <property type="entry name" value="ProQ/FinO domain"/>
    <property type="match status" value="1"/>
</dbReference>
<dbReference type="HAMAP" id="MF_00749">
    <property type="entry name" value="ProQ"/>
    <property type="match status" value="1"/>
</dbReference>
<dbReference type="InterPro" id="IPR023529">
    <property type="entry name" value="ProQ"/>
</dbReference>
<dbReference type="InterPro" id="IPR016103">
    <property type="entry name" value="ProQ/FinO"/>
</dbReference>
<dbReference type="InterPro" id="IPR036442">
    <property type="entry name" value="ProQ/FinO_sf"/>
</dbReference>
<dbReference type="InterPro" id="IPR035236">
    <property type="entry name" value="ProQ_C"/>
</dbReference>
<dbReference type="NCBIfam" id="NF003434">
    <property type="entry name" value="PRK04950.1"/>
    <property type="match status" value="1"/>
</dbReference>
<dbReference type="PANTHER" id="PTHR38106">
    <property type="entry name" value="RNA CHAPERONE PROQ"/>
    <property type="match status" value="1"/>
</dbReference>
<dbReference type="PANTHER" id="PTHR38106:SF1">
    <property type="entry name" value="RNA CHAPERONE PROQ"/>
    <property type="match status" value="1"/>
</dbReference>
<dbReference type="Pfam" id="PF04352">
    <property type="entry name" value="ProQ"/>
    <property type="match status" value="1"/>
</dbReference>
<dbReference type="Pfam" id="PF17516">
    <property type="entry name" value="ProQ_C"/>
    <property type="match status" value="1"/>
</dbReference>
<dbReference type="SMART" id="SM00945">
    <property type="entry name" value="ProQ"/>
    <property type="match status" value="1"/>
</dbReference>
<dbReference type="SUPFAM" id="SSF48657">
    <property type="entry name" value="FinO-like"/>
    <property type="match status" value="1"/>
</dbReference>
<feature type="chain" id="PRO_0000214621" description="RNA chaperone ProQ">
    <location>
        <begin position="1"/>
        <end position="228"/>
    </location>
</feature>
<feature type="region of interest" description="Disordered" evidence="2">
    <location>
        <begin position="107"/>
        <end position="178"/>
    </location>
</feature>
<feature type="compositionally biased region" description="Basic and acidic residues" evidence="2">
    <location>
        <begin position="117"/>
        <end position="136"/>
    </location>
</feature>
<feature type="compositionally biased region" description="Basic and acidic residues" evidence="2">
    <location>
        <begin position="146"/>
        <end position="175"/>
    </location>
</feature>
<keyword id="KW-0143">Chaperone</keyword>
<keyword id="KW-0963">Cytoplasm</keyword>
<keyword id="KW-0694">RNA-binding</keyword>
<proteinExistence type="inferred from homology"/>
<sequence length="228" mass="25438">MENQPKLNSSKEVIAFLAERFPHCFSAEGEARPLKIGIFQDLVERVGGEMNLSKTQLRSALRLYTSSWRYLYGVKPGATRVDLDGNPCGELEEQHVEHARKQLEEAKARVQAQRAEQQAKKREAAAAAGEKEDAPRRERKPRPVARRKEGAERKPRADKPTTKAPRAPREEKHTPVSDISVLTVGQSLKVKAGNNAMDATVLEITKDGVRVQLNSGMSLIVRAEHLVF</sequence>
<organism>
    <name type="scientific">Salmonella typhi</name>
    <dbReference type="NCBI Taxonomy" id="90370"/>
    <lineage>
        <taxon>Bacteria</taxon>
        <taxon>Pseudomonadati</taxon>
        <taxon>Pseudomonadota</taxon>
        <taxon>Gammaproteobacteria</taxon>
        <taxon>Enterobacterales</taxon>
        <taxon>Enterobacteriaceae</taxon>
        <taxon>Salmonella</taxon>
    </lineage>
</organism>
<accession>P60318</accession>
<accession>Q8XEP8</accession>
<reference key="1">
    <citation type="journal article" date="2001" name="Nature">
        <title>Complete genome sequence of a multiple drug resistant Salmonella enterica serovar Typhi CT18.</title>
        <authorList>
            <person name="Parkhill J."/>
            <person name="Dougan G."/>
            <person name="James K.D."/>
            <person name="Thomson N.R."/>
            <person name="Pickard D."/>
            <person name="Wain J."/>
            <person name="Churcher C.M."/>
            <person name="Mungall K.L."/>
            <person name="Bentley S.D."/>
            <person name="Holden M.T.G."/>
            <person name="Sebaihia M."/>
            <person name="Baker S."/>
            <person name="Basham D."/>
            <person name="Brooks K."/>
            <person name="Chillingworth T."/>
            <person name="Connerton P."/>
            <person name="Cronin A."/>
            <person name="Davis P."/>
            <person name="Davies R.M."/>
            <person name="Dowd L."/>
            <person name="White N."/>
            <person name="Farrar J."/>
            <person name="Feltwell T."/>
            <person name="Hamlin N."/>
            <person name="Haque A."/>
            <person name="Hien T.T."/>
            <person name="Holroyd S."/>
            <person name="Jagels K."/>
            <person name="Krogh A."/>
            <person name="Larsen T.S."/>
            <person name="Leather S."/>
            <person name="Moule S."/>
            <person name="O'Gaora P."/>
            <person name="Parry C."/>
            <person name="Quail M.A."/>
            <person name="Rutherford K.M."/>
            <person name="Simmonds M."/>
            <person name="Skelton J."/>
            <person name="Stevens K."/>
            <person name="Whitehead S."/>
            <person name="Barrell B.G."/>
        </authorList>
    </citation>
    <scope>NUCLEOTIDE SEQUENCE [LARGE SCALE GENOMIC DNA]</scope>
    <source>
        <strain>CT18</strain>
    </source>
</reference>
<reference key="2">
    <citation type="journal article" date="2003" name="J. Bacteriol.">
        <title>Comparative genomics of Salmonella enterica serovar Typhi strains Ty2 and CT18.</title>
        <authorList>
            <person name="Deng W."/>
            <person name="Liou S.-R."/>
            <person name="Plunkett G. III"/>
            <person name="Mayhew G.F."/>
            <person name="Rose D.J."/>
            <person name="Burland V."/>
            <person name="Kodoyianni V."/>
            <person name="Schwartz D.C."/>
            <person name="Blattner F.R."/>
        </authorList>
    </citation>
    <scope>NUCLEOTIDE SEQUENCE [LARGE SCALE GENOMIC DNA]</scope>
    <source>
        <strain>ATCC 700931 / Ty2</strain>
    </source>
</reference>
<name>PROQ_SALTI</name>